<sequence length="510" mass="55627">MEIRPAEISEILKKQIASFDTETDVAETGQVLSVGDGIARVFGLANVMAGEMVEFPNAGVQGMALNLENDNVGVVVFGDDKAIREGDTVTRTRRIVDVPVGKGLLGRVVDALGNPIDGKGPIEATERRLVETKAPGIIPRKSVHEPMQTGVKSIDALIPIGRGQRELVIGDRQTGKTAIIVDTFINQKPLNAQDDESKKLYCIYVAVGQKRSTVAQLVRTLEENGAMEYSIVIAATASEPAPMQFLAPYTGCAMGEYFRDNGMHALIVYDDLSKQAVAYRQMSLLLRRPPGREAYPGDVFYLHSRLLERAAKMSDEFGAGSLTALPVIETQAGDISAYIPTNVISITDGQIFLETELFFKGIRPAVNVGNSVSRVGSAAQIKAMKQVAGKIKLDLAQYREMAAFAQFASDLDASTQKLLARGARLTELLKQPQFKPLPVEEQVVSIFVGTRGYLDEVPVNRIGDFEAQLISEMKARSPEILDSIRNDREIKKETETKLVDFVKSFASSFA</sequence>
<feature type="chain" id="PRO_1000055050" description="ATP synthase subunit alpha">
    <location>
        <begin position="1"/>
        <end position="510"/>
    </location>
</feature>
<feature type="binding site" evidence="1">
    <location>
        <begin position="170"/>
        <end position="177"/>
    </location>
    <ligand>
        <name>ATP</name>
        <dbReference type="ChEBI" id="CHEBI:30616"/>
    </ligand>
</feature>
<feature type="site" description="Required for activity" evidence="1">
    <location>
        <position position="371"/>
    </location>
</feature>
<protein>
    <recommendedName>
        <fullName evidence="1">ATP synthase subunit alpha</fullName>
        <ecNumber evidence="1">7.1.2.2</ecNumber>
    </recommendedName>
    <alternativeName>
        <fullName evidence="1">ATP synthase F1 sector subunit alpha</fullName>
    </alternativeName>
    <alternativeName>
        <fullName evidence="1">F-ATPase subunit alpha</fullName>
    </alternativeName>
</protein>
<organism>
    <name type="scientific">Acidiphilium cryptum (strain JF-5)</name>
    <dbReference type="NCBI Taxonomy" id="349163"/>
    <lineage>
        <taxon>Bacteria</taxon>
        <taxon>Pseudomonadati</taxon>
        <taxon>Pseudomonadota</taxon>
        <taxon>Alphaproteobacteria</taxon>
        <taxon>Acetobacterales</taxon>
        <taxon>Acidocellaceae</taxon>
        <taxon>Acidiphilium</taxon>
    </lineage>
</organism>
<reference key="1">
    <citation type="submission" date="2007-05" db="EMBL/GenBank/DDBJ databases">
        <title>Complete sequence of chromosome of Acidiphilium cryptum JF-5.</title>
        <authorList>
            <consortium name="US DOE Joint Genome Institute"/>
            <person name="Copeland A."/>
            <person name="Lucas S."/>
            <person name="Lapidus A."/>
            <person name="Barry K."/>
            <person name="Detter J.C."/>
            <person name="Glavina del Rio T."/>
            <person name="Hammon N."/>
            <person name="Israni S."/>
            <person name="Dalin E."/>
            <person name="Tice H."/>
            <person name="Pitluck S."/>
            <person name="Sims D."/>
            <person name="Brettin T."/>
            <person name="Bruce D."/>
            <person name="Han C."/>
            <person name="Schmutz J."/>
            <person name="Larimer F."/>
            <person name="Land M."/>
            <person name="Hauser L."/>
            <person name="Kyrpides N."/>
            <person name="Kim E."/>
            <person name="Magnuson T."/>
            <person name="Richardson P."/>
        </authorList>
    </citation>
    <scope>NUCLEOTIDE SEQUENCE [LARGE SCALE GENOMIC DNA]</scope>
    <source>
        <strain>JF-5</strain>
    </source>
</reference>
<name>ATPA_ACICJ</name>
<evidence type="ECO:0000255" key="1">
    <source>
        <dbReference type="HAMAP-Rule" id="MF_01346"/>
    </source>
</evidence>
<keyword id="KW-0066">ATP synthesis</keyword>
<keyword id="KW-0067">ATP-binding</keyword>
<keyword id="KW-0997">Cell inner membrane</keyword>
<keyword id="KW-1003">Cell membrane</keyword>
<keyword id="KW-0139">CF(1)</keyword>
<keyword id="KW-0375">Hydrogen ion transport</keyword>
<keyword id="KW-0406">Ion transport</keyword>
<keyword id="KW-0472">Membrane</keyword>
<keyword id="KW-0547">Nucleotide-binding</keyword>
<keyword id="KW-1185">Reference proteome</keyword>
<keyword id="KW-1278">Translocase</keyword>
<keyword id="KW-0813">Transport</keyword>
<proteinExistence type="inferred from homology"/>
<gene>
    <name evidence="1" type="primary">atpA</name>
    <name type="ordered locus">Acry_1679</name>
</gene>
<comment type="function">
    <text evidence="1">Produces ATP from ADP in the presence of a proton gradient across the membrane. The alpha chain is a regulatory subunit.</text>
</comment>
<comment type="catalytic activity">
    <reaction evidence="1">
        <text>ATP + H2O + 4 H(+)(in) = ADP + phosphate + 5 H(+)(out)</text>
        <dbReference type="Rhea" id="RHEA:57720"/>
        <dbReference type="ChEBI" id="CHEBI:15377"/>
        <dbReference type="ChEBI" id="CHEBI:15378"/>
        <dbReference type="ChEBI" id="CHEBI:30616"/>
        <dbReference type="ChEBI" id="CHEBI:43474"/>
        <dbReference type="ChEBI" id="CHEBI:456216"/>
        <dbReference type="EC" id="7.1.2.2"/>
    </reaction>
</comment>
<comment type="subunit">
    <text evidence="1">F-type ATPases have 2 components, CF(1) - the catalytic core - and CF(0) - the membrane proton channel. CF(1) has five subunits: alpha(3), beta(3), gamma(1), delta(1), epsilon(1). CF(0) has three main subunits: a(1), b(2) and c(9-12). The alpha and beta chains form an alternating ring which encloses part of the gamma chain. CF(1) is attached to CF(0) by a central stalk formed by the gamma and epsilon chains, while a peripheral stalk is formed by the delta and b chains.</text>
</comment>
<comment type="subcellular location">
    <subcellularLocation>
        <location evidence="1">Cell inner membrane</location>
        <topology evidence="1">Peripheral membrane protein</topology>
    </subcellularLocation>
</comment>
<comment type="similarity">
    <text evidence="1">Belongs to the ATPase alpha/beta chains family.</text>
</comment>
<accession>A5FZ52</accession>
<dbReference type="EC" id="7.1.2.2" evidence="1"/>
<dbReference type="EMBL" id="CP000697">
    <property type="protein sequence ID" value="ABQ30884.1"/>
    <property type="molecule type" value="Genomic_DNA"/>
</dbReference>
<dbReference type="RefSeq" id="WP_007423085.1">
    <property type="nucleotide sequence ID" value="NC_009484.1"/>
</dbReference>
<dbReference type="SMR" id="A5FZ52"/>
<dbReference type="STRING" id="349163.Acry_1679"/>
<dbReference type="KEGG" id="acr:Acry_1679"/>
<dbReference type="eggNOG" id="COG0056">
    <property type="taxonomic scope" value="Bacteria"/>
</dbReference>
<dbReference type="HOGENOM" id="CLU_010091_2_1_5"/>
<dbReference type="Proteomes" id="UP000000245">
    <property type="component" value="Chromosome"/>
</dbReference>
<dbReference type="GO" id="GO:0005886">
    <property type="term" value="C:plasma membrane"/>
    <property type="evidence" value="ECO:0007669"/>
    <property type="project" value="UniProtKB-SubCell"/>
</dbReference>
<dbReference type="GO" id="GO:0045259">
    <property type="term" value="C:proton-transporting ATP synthase complex"/>
    <property type="evidence" value="ECO:0007669"/>
    <property type="project" value="UniProtKB-KW"/>
</dbReference>
<dbReference type="GO" id="GO:0043531">
    <property type="term" value="F:ADP binding"/>
    <property type="evidence" value="ECO:0007669"/>
    <property type="project" value="TreeGrafter"/>
</dbReference>
<dbReference type="GO" id="GO:0005524">
    <property type="term" value="F:ATP binding"/>
    <property type="evidence" value="ECO:0007669"/>
    <property type="project" value="UniProtKB-UniRule"/>
</dbReference>
<dbReference type="GO" id="GO:0046933">
    <property type="term" value="F:proton-transporting ATP synthase activity, rotational mechanism"/>
    <property type="evidence" value="ECO:0007669"/>
    <property type="project" value="UniProtKB-UniRule"/>
</dbReference>
<dbReference type="CDD" id="cd18113">
    <property type="entry name" value="ATP-synt_F1_alpha_C"/>
    <property type="match status" value="1"/>
</dbReference>
<dbReference type="CDD" id="cd18116">
    <property type="entry name" value="ATP-synt_F1_alpha_N"/>
    <property type="match status" value="1"/>
</dbReference>
<dbReference type="CDD" id="cd01132">
    <property type="entry name" value="F1-ATPase_alpha_CD"/>
    <property type="match status" value="1"/>
</dbReference>
<dbReference type="FunFam" id="1.20.150.20:FF:000001">
    <property type="entry name" value="ATP synthase subunit alpha"/>
    <property type="match status" value="1"/>
</dbReference>
<dbReference type="FunFam" id="2.40.30.20:FF:000001">
    <property type="entry name" value="ATP synthase subunit alpha"/>
    <property type="match status" value="1"/>
</dbReference>
<dbReference type="FunFam" id="3.40.50.300:FF:002432">
    <property type="entry name" value="ATP synthase subunit alpha, mitochondrial"/>
    <property type="match status" value="1"/>
</dbReference>
<dbReference type="Gene3D" id="2.40.30.20">
    <property type="match status" value="1"/>
</dbReference>
<dbReference type="Gene3D" id="1.20.150.20">
    <property type="entry name" value="ATP synthase alpha/beta chain, C-terminal domain"/>
    <property type="match status" value="1"/>
</dbReference>
<dbReference type="Gene3D" id="3.40.50.300">
    <property type="entry name" value="P-loop containing nucleotide triphosphate hydrolases"/>
    <property type="match status" value="1"/>
</dbReference>
<dbReference type="HAMAP" id="MF_01346">
    <property type="entry name" value="ATP_synth_alpha_bact"/>
    <property type="match status" value="1"/>
</dbReference>
<dbReference type="InterPro" id="IPR023366">
    <property type="entry name" value="ATP_synth_asu-like_sf"/>
</dbReference>
<dbReference type="InterPro" id="IPR000793">
    <property type="entry name" value="ATP_synth_asu_C"/>
</dbReference>
<dbReference type="InterPro" id="IPR038376">
    <property type="entry name" value="ATP_synth_asu_C_sf"/>
</dbReference>
<dbReference type="InterPro" id="IPR033732">
    <property type="entry name" value="ATP_synth_F1_a_nt-bd_dom"/>
</dbReference>
<dbReference type="InterPro" id="IPR005294">
    <property type="entry name" value="ATP_synth_F1_asu"/>
</dbReference>
<dbReference type="InterPro" id="IPR020003">
    <property type="entry name" value="ATPase_a/bsu_AS"/>
</dbReference>
<dbReference type="InterPro" id="IPR004100">
    <property type="entry name" value="ATPase_F1/V1/A1_a/bsu_N"/>
</dbReference>
<dbReference type="InterPro" id="IPR036121">
    <property type="entry name" value="ATPase_F1/V1/A1_a/bsu_N_sf"/>
</dbReference>
<dbReference type="InterPro" id="IPR000194">
    <property type="entry name" value="ATPase_F1/V1/A1_a/bsu_nucl-bd"/>
</dbReference>
<dbReference type="InterPro" id="IPR027417">
    <property type="entry name" value="P-loop_NTPase"/>
</dbReference>
<dbReference type="NCBIfam" id="TIGR00962">
    <property type="entry name" value="atpA"/>
    <property type="match status" value="1"/>
</dbReference>
<dbReference type="NCBIfam" id="NF009884">
    <property type="entry name" value="PRK13343.1"/>
    <property type="match status" value="1"/>
</dbReference>
<dbReference type="PANTHER" id="PTHR48082">
    <property type="entry name" value="ATP SYNTHASE SUBUNIT ALPHA, MITOCHONDRIAL"/>
    <property type="match status" value="1"/>
</dbReference>
<dbReference type="PANTHER" id="PTHR48082:SF2">
    <property type="entry name" value="ATP SYNTHASE SUBUNIT ALPHA, MITOCHONDRIAL"/>
    <property type="match status" value="1"/>
</dbReference>
<dbReference type="Pfam" id="PF00006">
    <property type="entry name" value="ATP-synt_ab"/>
    <property type="match status" value="1"/>
</dbReference>
<dbReference type="Pfam" id="PF00306">
    <property type="entry name" value="ATP-synt_ab_C"/>
    <property type="match status" value="1"/>
</dbReference>
<dbReference type="Pfam" id="PF02874">
    <property type="entry name" value="ATP-synt_ab_N"/>
    <property type="match status" value="1"/>
</dbReference>
<dbReference type="PIRSF" id="PIRSF039088">
    <property type="entry name" value="F_ATPase_subunit_alpha"/>
    <property type="match status" value="1"/>
</dbReference>
<dbReference type="SUPFAM" id="SSF47917">
    <property type="entry name" value="C-terminal domain of alpha and beta subunits of F1 ATP synthase"/>
    <property type="match status" value="1"/>
</dbReference>
<dbReference type="SUPFAM" id="SSF50615">
    <property type="entry name" value="N-terminal domain of alpha and beta subunits of F1 ATP synthase"/>
    <property type="match status" value="1"/>
</dbReference>
<dbReference type="SUPFAM" id="SSF52540">
    <property type="entry name" value="P-loop containing nucleoside triphosphate hydrolases"/>
    <property type="match status" value="1"/>
</dbReference>
<dbReference type="PROSITE" id="PS00152">
    <property type="entry name" value="ATPASE_ALPHA_BETA"/>
    <property type="match status" value="1"/>
</dbReference>